<name>Y277_SULAC</name>
<accession>Q4JBY6</accession>
<organism>
    <name type="scientific">Sulfolobus acidocaldarius (strain ATCC 33909 / DSM 639 / JCM 8929 / NBRC 15157 / NCIMB 11770)</name>
    <dbReference type="NCBI Taxonomy" id="330779"/>
    <lineage>
        <taxon>Archaea</taxon>
        <taxon>Thermoproteota</taxon>
        <taxon>Thermoprotei</taxon>
        <taxon>Sulfolobales</taxon>
        <taxon>Sulfolobaceae</taxon>
        <taxon>Sulfolobus</taxon>
    </lineage>
</organism>
<protein>
    <recommendedName>
        <fullName evidence="1">UPF0282 protein Saci_0277</fullName>
    </recommendedName>
</protein>
<feature type="chain" id="PRO_0000057639" description="UPF0282 protein Saci_0277">
    <location>
        <begin position="1"/>
        <end position="309"/>
    </location>
</feature>
<gene>
    <name type="ordered locus">Saci_0277</name>
</gene>
<dbReference type="EMBL" id="CP000077">
    <property type="protein sequence ID" value="AAY79693.1"/>
    <property type="molecule type" value="Genomic_DNA"/>
</dbReference>
<dbReference type="RefSeq" id="WP_011277195.1">
    <property type="nucleotide sequence ID" value="NC_007181.1"/>
</dbReference>
<dbReference type="STRING" id="330779.Saci_0277"/>
<dbReference type="GeneID" id="14550807"/>
<dbReference type="KEGG" id="sai:Saci_0277"/>
<dbReference type="PATRIC" id="fig|330779.12.peg.274"/>
<dbReference type="eggNOG" id="arCOG00969">
    <property type="taxonomic scope" value="Archaea"/>
</dbReference>
<dbReference type="HOGENOM" id="CLU_079268_0_0_2"/>
<dbReference type="Proteomes" id="UP000001018">
    <property type="component" value="Chromosome"/>
</dbReference>
<dbReference type="Gene3D" id="3.60.15.10">
    <property type="entry name" value="Ribonuclease Z/Hydroxyacylglutathione hydrolase-like"/>
    <property type="match status" value="1"/>
</dbReference>
<dbReference type="HAMAP" id="MF_01406">
    <property type="entry name" value="UPF0282"/>
    <property type="match status" value="1"/>
</dbReference>
<dbReference type="InterPro" id="IPR001279">
    <property type="entry name" value="Metallo-B-lactamas"/>
</dbReference>
<dbReference type="InterPro" id="IPR036866">
    <property type="entry name" value="RibonucZ/Hydroxyglut_hydro"/>
</dbReference>
<dbReference type="InterPro" id="IPR050114">
    <property type="entry name" value="UPF0173_UPF0282_UlaG_hydrolase"/>
</dbReference>
<dbReference type="InterPro" id="IPR014426">
    <property type="entry name" value="UPF0282_hydrls"/>
</dbReference>
<dbReference type="NCBIfam" id="NF003287">
    <property type="entry name" value="PRK04286.1-1"/>
    <property type="match status" value="1"/>
</dbReference>
<dbReference type="PANTHER" id="PTHR43546">
    <property type="entry name" value="UPF0173 METAL-DEPENDENT HYDROLASE MJ1163-RELATED"/>
    <property type="match status" value="1"/>
</dbReference>
<dbReference type="PANTHER" id="PTHR43546:SF4">
    <property type="entry name" value="UPF0282 PROTEIN MJ1629"/>
    <property type="match status" value="1"/>
</dbReference>
<dbReference type="Pfam" id="PF00753">
    <property type="entry name" value="Lactamase_B"/>
    <property type="match status" value="1"/>
</dbReference>
<dbReference type="PIRSF" id="PIRSF004944">
    <property type="entry name" value="UCP004944_hydrls"/>
    <property type="match status" value="1"/>
</dbReference>
<dbReference type="SUPFAM" id="SSF56281">
    <property type="entry name" value="Metallo-hydrolase/oxidoreductase"/>
    <property type="match status" value="1"/>
</dbReference>
<keyword id="KW-1185">Reference proteome</keyword>
<proteinExistence type="inferred from homology"/>
<evidence type="ECO:0000255" key="1">
    <source>
        <dbReference type="HAMAP-Rule" id="MF_01406"/>
    </source>
</evidence>
<reference key="1">
    <citation type="journal article" date="2005" name="J. Bacteriol.">
        <title>The genome of Sulfolobus acidocaldarius, a model organism of the Crenarchaeota.</title>
        <authorList>
            <person name="Chen L."/>
            <person name="Bruegger K."/>
            <person name="Skovgaard M."/>
            <person name="Redder P."/>
            <person name="She Q."/>
            <person name="Torarinsson E."/>
            <person name="Greve B."/>
            <person name="Awayez M."/>
            <person name="Zibat A."/>
            <person name="Klenk H.-P."/>
            <person name="Garrett R.A."/>
        </authorList>
    </citation>
    <scope>NUCLEOTIDE SEQUENCE [LARGE SCALE GENOMIC DNA]</scope>
    <source>
        <strain>ATCC 33909 / DSM 639 / JCM 8929 / NBRC 15157 / NCIMB 11770</strain>
    </source>
</reference>
<sequence>MEFTPLAFESLGVRSQATLVETKDVRILIDPAVSLAPRRFGLPPHQIEVDRLTELAKKIYEEAKIADIIIITHYHYDHHDPGYVIPLDIYQNKTVYIKDPQNFINPSQKFRRAPRFIKTITGKPKTMESADGKVVKYGSTTIQFSKAVPHGADERLGYVIQVAINDKDSTILFTSDIEGAPKNSHIDFIKSVRPNFLIIDGPLSYLLGRALSQDELDTEIKNMEEVVRNGLQYAIIDHHVLRDPNYESVLKPVKEVANSVGCKVISASEYLREPPQLLEAKRRELFQRDNRPAKIPRGLAKLLSAGEGG</sequence>
<comment type="similarity">
    <text evidence="1">Belongs to the UPF0282 family.</text>
</comment>